<comment type="subcellular location">
    <subcellularLocation>
        <location evidence="1">Plastid</location>
        <location evidence="1">Chloroplast thylakoid membrane</location>
        <topology evidence="1">Multi-pass membrane protein</topology>
    </subcellularLocation>
</comment>
<comment type="similarity">
    <text evidence="3">Belongs to the PsaG/PsaK family.</text>
</comment>
<gene>
    <name type="primary">psaK</name>
</gene>
<evidence type="ECO:0000250" key="1"/>
<evidence type="ECO:0000255" key="2"/>
<evidence type="ECO:0000305" key="3"/>
<reference key="1">
    <citation type="journal article" date="2000" name="J. Mol. Evol.">
        <title>The structure and gene repertoire of an ancient red algal plastid genome.</title>
        <authorList>
            <person name="Gloeckner G."/>
            <person name="Rosenthal A."/>
            <person name="Valentin K.-U."/>
        </authorList>
    </citation>
    <scope>NUCLEOTIDE SEQUENCE [LARGE SCALE GENOMIC DNA]</scope>
    <source>
        <strain>RK-1</strain>
    </source>
</reference>
<proteinExistence type="inferred from homology"/>
<protein>
    <recommendedName>
        <fullName>Photosystem I reaction center subunit PsaK</fullName>
    </recommendedName>
    <alternativeName>
        <fullName>PSI-K</fullName>
    </alternativeName>
    <alternativeName>
        <fullName>Photosystem I subunit X</fullName>
    </alternativeName>
</protein>
<dbReference type="EMBL" id="AF022186">
    <property type="protein sequence ID" value="AAB82687.1"/>
    <property type="molecule type" value="Genomic_DNA"/>
</dbReference>
<dbReference type="PIR" id="T11970">
    <property type="entry name" value="T11970"/>
</dbReference>
<dbReference type="RefSeq" id="NP_045074.1">
    <property type="nucleotide sequence ID" value="NC_001840.1"/>
</dbReference>
<dbReference type="SMR" id="O19902"/>
<dbReference type="GeneID" id="800301"/>
<dbReference type="GO" id="GO:0009535">
    <property type="term" value="C:chloroplast thylakoid membrane"/>
    <property type="evidence" value="ECO:0007669"/>
    <property type="project" value="UniProtKB-SubCell"/>
</dbReference>
<dbReference type="GO" id="GO:0009522">
    <property type="term" value="C:photosystem I"/>
    <property type="evidence" value="ECO:0007669"/>
    <property type="project" value="UniProtKB-KW"/>
</dbReference>
<dbReference type="GO" id="GO:0015979">
    <property type="term" value="P:photosynthesis"/>
    <property type="evidence" value="ECO:0007669"/>
    <property type="project" value="UniProtKB-UniRule"/>
</dbReference>
<dbReference type="Gene3D" id="1.20.860.20">
    <property type="entry name" value="Photosystem I PsaK, reaction centre"/>
    <property type="match status" value="1"/>
</dbReference>
<dbReference type="HAMAP" id="MF_00474">
    <property type="entry name" value="PSI_PsaK"/>
    <property type="match status" value="1"/>
</dbReference>
<dbReference type="InterPro" id="IPR035982">
    <property type="entry name" value="PSI_centre_PsaK_sf"/>
</dbReference>
<dbReference type="InterPro" id="IPR000549">
    <property type="entry name" value="PSI_PsaG/PsaK"/>
</dbReference>
<dbReference type="InterPro" id="IPR017492">
    <property type="entry name" value="PSI_PsaK"/>
</dbReference>
<dbReference type="InterPro" id="IPR037101">
    <property type="entry name" value="PSI_PsaK_bact"/>
</dbReference>
<dbReference type="NCBIfam" id="TIGR03049">
    <property type="entry name" value="PS_I_psaK"/>
    <property type="match status" value="1"/>
</dbReference>
<dbReference type="Pfam" id="PF01241">
    <property type="entry name" value="PSI_PSAK"/>
    <property type="match status" value="1"/>
</dbReference>
<dbReference type="SUPFAM" id="SSF81563">
    <property type="entry name" value="Photosystem I reaction center subunit X, PsaK"/>
    <property type="match status" value="1"/>
</dbReference>
<dbReference type="PROSITE" id="PS01026">
    <property type="entry name" value="PHOTOSYSTEM_I_PSAGK"/>
    <property type="match status" value="1"/>
</dbReference>
<geneLocation type="chloroplast"/>
<accession>O19902</accession>
<name>PSAK_CYACA</name>
<keyword id="KW-0150">Chloroplast</keyword>
<keyword id="KW-0472">Membrane</keyword>
<keyword id="KW-0602">Photosynthesis</keyword>
<keyword id="KW-0603">Photosystem I</keyword>
<keyword id="KW-0934">Plastid</keyword>
<keyword id="KW-0793">Thylakoid</keyword>
<keyword id="KW-0812">Transmembrane</keyword>
<keyword id="KW-1133">Transmembrane helix</keyword>
<organism>
    <name type="scientific">Cyanidium caldarium</name>
    <name type="common">Red alga</name>
    <dbReference type="NCBI Taxonomy" id="2771"/>
    <lineage>
        <taxon>Eukaryota</taxon>
        <taxon>Rhodophyta</taxon>
        <taxon>Bangiophyceae</taxon>
        <taxon>Cyanidiales</taxon>
        <taxon>Cyanidiaceae</taxon>
        <taxon>Cyanidium</taxon>
    </lineage>
</organism>
<feature type="chain" id="PRO_0000206212" description="Photosystem I reaction center subunit PsaK">
    <location>
        <begin position="1"/>
        <end position="84"/>
    </location>
</feature>
<feature type="transmembrane region" description="Helical" evidence="2">
    <location>
        <begin position="12"/>
        <end position="32"/>
    </location>
</feature>
<feature type="transmembrane region" description="Helical" evidence="2">
    <location>
        <begin position="54"/>
        <end position="74"/>
    </location>
</feature>
<sequence>MLASYLNLFNTPWNSSISIIMILSNIMAIVVGRYSIKVRGLKPPIAISQLKDFGVPELLATMSLGHIIGVGSTIGLKTLNFITY</sequence>